<feature type="chain" id="PRO_0000327247" description="Actin-related protein 2-A">
    <location>
        <begin position="1"/>
        <end position="394"/>
    </location>
</feature>
<feature type="binding site" evidence="1">
    <location>
        <begin position="160"/>
        <end position="162"/>
    </location>
    <ligand>
        <name>ATP</name>
        <dbReference type="ChEBI" id="CHEBI:30616"/>
    </ligand>
</feature>
<feature type="binding site" evidence="1">
    <location>
        <begin position="214"/>
        <end position="218"/>
    </location>
    <ligand>
        <name>ATP</name>
        <dbReference type="ChEBI" id="CHEBI:30616"/>
    </ligand>
</feature>
<feature type="binding site" evidence="1">
    <location>
        <begin position="305"/>
        <end position="310"/>
    </location>
    <ligand>
        <name>ATP</name>
        <dbReference type="ChEBI" id="CHEBI:30616"/>
    </ligand>
</feature>
<name>ARP2A_DANRE</name>
<comment type="function">
    <text evidence="2 3">ATP-binding component of the Arp2/3 complex, a multiprotein complex that mediates actin polymerization upon stimulation by nucleation-promoting factor (NPF) (By similarity). The Arp2/3 complex mediates the formation of branched actin networks in the cytoplasm, providing the force for cell motility (By similarity). Seems to contact the pointed end of the daughter actin filament (By similarity). In addition to its role in the cytoplasmic cytoskeleton, the Arp2/3 complex also promotes actin polymerization in the nucleus, thereby regulating gene transcription and repair of damaged DNA (By similarity). The Arp2/3 complex promotes homologous recombination (HR) repair in response to DNA damage by promoting nuclear actin polymerization, leading to drive motility of double-strand breaks (DSBs) (By similarity).</text>
</comment>
<comment type="subunit">
    <text evidence="3">Component of the Arp2/3 complex composed of actr2/arp2, actr3/arp3, arpc1b, arpc2, arpc3, arpc4 and arpc5.</text>
</comment>
<comment type="subcellular location">
    <subcellularLocation>
        <location evidence="3">Cytoplasm</location>
        <location evidence="3">Cytoskeleton</location>
    </subcellularLocation>
    <subcellularLocation>
        <location evidence="3">Cell projection</location>
    </subcellularLocation>
    <subcellularLocation>
        <location evidence="3">Nucleus</location>
    </subcellularLocation>
</comment>
<comment type="similarity">
    <text evidence="4">Belongs to the actin family. ARP2 subfamily.</text>
</comment>
<gene>
    <name type="primary">actr2a</name>
    <name type="synonym">actr2</name>
    <name type="synonym">arp2a</name>
</gene>
<keyword id="KW-0009">Actin-binding</keyword>
<keyword id="KW-0067">ATP-binding</keyword>
<keyword id="KW-0966">Cell projection</keyword>
<keyword id="KW-0963">Cytoplasm</keyword>
<keyword id="KW-0206">Cytoskeleton</keyword>
<keyword id="KW-0547">Nucleotide-binding</keyword>
<keyword id="KW-0539">Nucleus</keyword>
<keyword id="KW-1185">Reference proteome</keyword>
<evidence type="ECO:0000250" key="1">
    <source>
        <dbReference type="UniProtKB" id="A7MB62"/>
    </source>
</evidence>
<evidence type="ECO:0000250" key="2">
    <source>
        <dbReference type="UniProtKB" id="P61160"/>
    </source>
</evidence>
<evidence type="ECO:0000250" key="3">
    <source>
        <dbReference type="UniProtKB" id="Q7ZTP2"/>
    </source>
</evidence>
<evidence type="ECO:0000305" key="4"/>
<reference key="1">
    <citation type="submission" date="2003-07" db="EMBL/GenBank/DDBJ databases">
        <authorList>
            <consortium name="NIH - Zebrafish Gene Collection (ZGC) project"/>
        </authorList>
    </citation>
    <scope>NUCLEOTIDE SEQUENCE [LARGE SCALE MRNA]</scope>
    <source>
        <strain>AB</strain>
    </source>
</reference>
<protein>
    <recommendedName>
        <fullName>Actin-related protein 2-A</fullName>
    </recommendedName>
    <alternativeName>
        <fullName>Actin-like protein 2-A</fullName>
    </alternativeName>
</protein>
<proteinExistence type="evidence at transcript level"/>
<dbReference type="EMBL" id="BC055220">
    <property type="protein sequence ID" value="AAH55220.1"/>
    <property type="molecule type" value="mRNA"/>
</dbReference>
<dbReference type="RefSeq" id="NP_998664.1">
    <property type="nucleotide sequence ID" value="NM_213499.1"/>
</dbReference>
<dbReference type="SMR" id="Q7SXW6"/>
<dbReference type="FunCoup" id="Q7SXW6">
    <property type="interactions" value="3542"/>
</dbReference>
<dbReference type="STRING" id="7955.ENSDARP00000068783"/>
<dbReference type="PaxDb" id="7955-ENSDARP00000068783"/>
<dbReference type="GeneID" id="406820"/>
<dbReference type="KEGG" id="dre:406820"/>
<dbReference type="AGR" id="ZFIN:ZDB-GENE-040426-2894"/>
<dbReference type="CTD" id="406820"/>
<dbReference type="ZFIN" id="ZDB-GENE-040426-2894">
    <property type="gene designation" value="actr2a"/>
</dbReference>
<dbReference type="eggNOG" id="KOG0677">
    <property type="taxonomic scope" value="Eukaryota"/>
</dbReference>
<dbReference type="InParanoid" id="Q7SXW6"/>
<dbReference type="OrthoDB" id="10251209at2759"/>
<dbReference type="PhylomeDB" id="Q7SXW6"/>
<dbReference type="Reactome" id="R-DRE-2029482">
    <property type="pathway name" value="Regulation of actin dynamics for phagocytic cup formation"/>
</dbReference>
<dbReference type="Reactome" id="R-DRE-3928662">
    <property type="pathway name" value="EPHB-mediated forward signaling"/>
</dbReference>
<dbReference type="Reactome" id="R-DRE-5663213">
    <property type="pathway name" value="RHO GTPases Activate WASPs and WAVEs"/>
</dbReference>
<dbReference type="Reactome" id="R-DRE-6798695">
    <property type="pathway name" value="Neutrophil degranulation"/>
</dbReference>
<dbReference type="PRO" id="PR:Q7SXW6"/>
<dbReference type="Proteomes" id="UP000000437">
    <property type="component" value="Chromosome 1"/>
</dbReference>
<dbReference type="GO" id="GO:0005885">
    <property type="term" value="C:Arp2/3 protein complex"/>
    <property type="evidence" value="ECO:0000250"/>
    <property type="project" value="UniProtKB"/>
</dbReference>
<dbReference type="GO" id="GO:0005938">
    <property type="term" value="C:cell cortex"/>
    <property type="evidence" value="ECO:0000318"/>
    <property type="project" value="GO_Central"/>
</dbReference>
<dbReference type="GO" id="GO:0042995">
    <property type="term" value="C:cell projection"/>
    <property type="evidence" value="ECO:0007669"/>
    <property type="project" value="UniProtKB-SubCell"/>
</dbReference>
<dbReference type="GO" id="GO:0005737">
    <property type="term" value="C:cytoplasm"/>
    <property type="evidence" value="ECO:0000250"/>
    <property type="project" value="UniProtKB"/>
</dbReference>
<dbReference type="GO" id="GO:0005634">
    <property type="term" value="C:nucleus"/>
    <property type="evidence" value="ECO:0000250"/>
    <property type="project" value="UniProtKB"/>
</dbReference>
<dbReference type="GO" id="GO:0035861">
    <property type="term" value="C:site of double-strand break"/>
    <property type="evidence" value="ECO:0000250"/>
    <property type="project" value="UniProtKB"/>
</dbReference>
<dbReference type="GO" id="GO:0003779">
    <property type="term" value="F:actin binding"/>
    <property type="evidence" value="ECO:0007669"/>
    <property type="project" value="UniProtKB-KW"/>
</dbReference>
<dbReference type="GO" id="GO:0005524">
    <property type="term" value="F:ATP binding"/>
    <property type="evidence" value="ECO:0007669"/>
    <property type="project" value="UniProtKB-KW"/>
</dbReference>
<dbReference type="GO" id="GO:0034314">
    <property type="term" value="P:Arp2/3 complex-mediated actin nucleation"/>
    <property type="evidence" value="ECO:0000250"/>
    <property type="project" value="UniProtKB"/>
</dbReference>
<dbReference type="GO" id="GO:1905168">
    <property type="term" value="P:positive regulation of double-strand break repair via homologous recombination"/>
    <property type="evidence" value="ECO:0000250"/>
    <property type="project" value="UniProtKB"/>
</dbReference>
<dbReference type="GO" id="GO:0045944">
    <property type="term" value="P:positive regulation of transcription by RNA polymerase II"/>
    <property type="evidence" value="ECO:0000250"/>
    <property type="project" value="UniProtKB"/>
</dbReference>
<dbReference type="CDD" id="cd10220">
    <property type="entry name" value="ASKHA_NBD_Arp2"/>
    <property type="match status" value="1"/>
</dbReference>
<dbReference type="FunFam" id="3.30.420.40:FF:000538">
    <property type="entry name" value="Actin-related protein 2"/>
    <property type="match status" value="1"/>
</dbReference>
<dbReference type="FunFam" id="3.90.640.10:FF:000005">
    <property type="entry name" value="Actin-related protein 2"/>
    <property type="match status" value="1"/>
</dbReference>
<dbReference type="Gene3D" id="3.30.420.40">
    <property type="match status" value="2"/>
</dbReference>
<dbReference type="Gene3D" id="3.90.640.10">
    <property type="entry name" value="Actin, Chain A, domain 4"/>
    <property type="match status" value="1"/>
</dbReference>
<dbReference type="InterPro" id="IPR004000">
    <property type="entry name" value="Actin"/>
</dbReference>
<dbReference type="InterPro" id="IPR020902">
    <property type="entry name" value="Actin/actin-like_CS"/>
</dbReference>
<dbReference type="InterPro" id="IPR043129">
    <property type="entry name" value="ATPase_NBD"/>
</dbReference>
<dbReference type="PANTHER" id="PTHR11937">
    <property type="entry name" value="ACTIN"/>
    <property type="match status" value="1"/>
</dbReference>
<dbReference type="Pfam" id="PF00022">
    <property type="entry name" value="Actin"/>
    <property type="match status" value="1"/>
</dbReference>
<dbReference type="PRINTS" id="PR00190">
    <property type="entry name" value="ACTIN"/>
</dbReference>
<dbReference type="SMART" id="SM00268">
    <property type="entry name" value="ACTIN"/>
    <property type="match status" value="1"/>
</dbReference>
<dbReference type="SUPFAM" id="SSF53067">
    <property type="entry name" value="Actin-like ATPase domain"/>
    <property type="match status" value="2"/>
</dbReference>
<dbReference type="PROSITE" id="PS01132">
    <property type="entry name" value="ACTINS_ACT_LIKE"/>
    <property type="match status" value="1"/>
</dbReference>
<organism>
    <name type="scientific">Danio rerio</name>
    <name type="common">Zebrafish</name>
    <name type="synonym">Brachydanio rerio</name>
    <dbReference type="NCBI Taxonomy" id="7955"/>
    <lineage>
        <taxon>Eukaryota</taxon>
        <taxon>Metazoa</taxon>
        <taxon>Chordata</taxon>
        <taxon>Craniata</taxon>
        <taxon>Vertebrata</taxon>
        <taxon>Euteleostomi</taxon>
        <taxon>Actinopterygii</taxon>
        <taxon>Neopterygii</taxon>
        <taxon>Teleostei</taxon>
        <taxon>Ostariophysi</taxon>
        <taxon>Cypriniformes</taxon>
        <taxon>Danionidae</taxon>
        <taxon>Danioninae</taxon>
        <taxon>Danio</taxon>
    </lineage>
</organism>
<accession>Q7SXW6</accession>
<sequence length="394" mass="44622">MDSQGKKVVVCDNGTGFVKCGYAGSNFPEHIFPALVGRPIIRSTAKVGNIEIKDLMVGDEASELRSMLEVNYPMENGIVRNWDDMKHLWDYTFGPEKLNIDSRNCKILLTEPPMNPTKNREKIIEVMFETYQFSGVYIAIQAVLTLYAQGLLTGVVVDSGDGVTHICPVYEGFSLPHLTRRLDIAGRDITRYLIKLLLLRGYAFNHSADFETVRMMKEKLCYVGYNIEQEQKLALETTVLVESYTLPDGRVIKVGGERFGAPEALFQPHLINVEGVGVAELLFNTIQAADIDTRAEFYKHIVLSGGSTMYPGLPSRLERELKQLYLERVLKGDVDKLSKFKIRIEDPPRRKHMVFLGGAVLADIMKDKDNFWMTREEYQEKGTRVLEKLGVTVR</sequence>